<protein>
    <recommendedName>
        <fullName evidence="1">Ribosomal protein L11 methyltransferase</fullName>
        <shortName evidence="1">L11 Mtase</shortName>
        <ecNumber evidence="1">2.1.1.-</ecNumber>
    </recommendedName>
</protein>
<sequence>MSYRELVVELAREHAEALSDALLDLGALSVSVEDADADTPDEQPLFGEPGLVPDRTAWQHSRVVALLSADHEPAVLLAAAANEIGLAETPKFVVREVEEQDWVRLTQSQFEPIPIGERIWVVPSWHDAPDPDALVLELDPGLAFGTGSHPTTRLCMEWLEQSVKPGQSVLDYGCGSGILAILAKKCGANPVIGIDIDPQAVESARQNSERNRAEVTYGLPDACPDGEFDIVVANILSNPLKLMASMLASKVKPGGRIALSGVLARQADEVAAVYARYVDISVWREHEGWVCLAGTRRESH</sequence>
<name>PRMA_BURO1</name>
<accession>Q1BZC1</accession>
<proteinExistence type="inferred from homology"/>
<organism>
    <name type="scientific">Burkholderia orbicola (strain AU 1054)</name>
    <dbReference type="NCBI Taxonomy" id="331271"/>
    <lineage>
        <taxon>Bacteria</taxon>
        <taxon>Pseudomonadati</taxon>
        <taxon>Pseudomonadota</taxon>
        <taxon>Betaproteobacteria</taxon>
        <taxon>Burkholderiales</taxon>
        <taxon>Burkholderiaceae</taxon>
        <taxon>Burkholderia</taxon>
        <taxon>Burkholderia cepacia complex</taxon>
        <taxon>Burkholderia orbicola</taxon>
    </lineage>
</organism>
<keyword id="KW-0963">Cytoplasm</keyword>
<keyword id="KW-0489">Methyltransferase</keyword>
<keyword id="KW-0949">S-adenosyl-L-methionine</keyword>
<keyword id="KW-0808">Transferase</keyword>
<feature type="chain" id="PRO_1000045990" description="Ribosomal protein L11 methyltransferase">
    <location>
        <begin position="1"/>
        <end position="300"/>
    </location>
</feature>
<feature type="binding site" evidence="1">
    <location>
        <position position="152"/>
    </location>
    <ligand>
        <name>S-adenosyl-L-methionine</name>
        <dbReference type="ChEBI" id="CHEBI:59789"/>
    </ligand>
</feature>
<feature type="binding site" evidence="1">
    <location>
        <position position="173"/>
    </location>
    <ligand>
        <name>S-adenosyl-L-methionine</name>
        <dbReference type="ChEBI" id="CHEBI:59789"/>
    </ligand>
</feature>
<feature type="binding site" evidence="1">
    <location>
        <position position="195"/>
    </location>
    <ligand>
        <name>S-adenosyl-L-methionine</name>
        <dbReference type="ChEBI" id="CHEBI:59789"/>
    </ligand>
</feature>
<feature type="binding site" evidence="1">
    <location>
        <position position="234"/>
    </location>
    <ligand>
        <name>S-adenosyl-L-methionine</name>
        <dbReference type="ChEBI" id="CHEBI:59789"/>
    </ligand>
</feature>
<comment type="function">
    <text evidence="1">Methylates ribosomal protein L11.</text>
</comment>
<comment type="catalytic activity">
    <reaction evidence="1">
        <text>L-lysyl-[protein] + 3 S-adenosyl-L-methionine = N(6),N(6),N(6)-trimethyl-L-lysyl-[protein] + 3 S-adenosyl-L-homocysteine + 3 H(+)</text>
        <dbReference type="Rhea" id="RHEA:54192"/>
        <dbReference type="Rhea" id="RHEA-COMP:9752"/>
        <dbReference type="Rhea" id="RHEA-COMP:13826"/>
        <dbReference type="ChEBI" id="CHEBI:15378"/>
        <dbReference type="ChEBI" id="CHEBI:29969"/>
        <dbReference type="ChEBI" id="CHEBI:57856"/>
        <dbReference type="ChEBI" id="CHEBI:59789"/>
        <dbReference type="ChEBI" id="CHEBI:61961"/>
    </reaction>
</comment>
<comment type="subcellular location">
    <subcellularLocation>
        <location evidence="1">Cytoplasm</location>
    </subcellularLocation>
</comment>
<comment type="similarity">
    <text evidence="1">Belongs to the methyltransferase superfamily. PrmA family.</text>
</comment>
<dbReference type="EC" id="2.1.1.-" evidence="1"/>
<dbReference type="EMBL" id="CP000378">
    <property type="protein sequence ID" value="ABF75034.1"/>
    <property type="molecule type" value="Genomic_DNA"/>
</dbReference>
<dbReference type="SMR" id="Q1BZC1"/>
<dbReference type="HOGENOM" id="CLU_049382_4_1_4"/>
<dbReference type="GO" id="GO:0005829">
    <property type="term" value="C:cytosol"/>
    <property type="evidence" value="ECO:0007669"/>
    <property type="project" value="TreeGrafter"/>
</dbReference>
<dbReference type="GO" id="GO:0016279">
    <property type="term" value="F:protein-lysine N-methyltransferase activity"/>
    <property type="evidence" value="ECO:0007669"/>
    <property type="project" value="TreeGrafter"/>
</dbReference>
<dbReference type="GO" id="GO:0032259">
    <property type="term" value="P:methylation"/>
    <property type="evidence" value="ECO:0007669"/>
    <property type="project" value="UniProtKB-KW"/>
</dbReference>
<dbReference type="CDD" id="cd02440">
    <property type="entry name" value="AdoMet_MTases"/>
    <property type="match status" value="1"/>
</dbReference>
<dbReference type="Gene3D" id="3.40.50.150">
    <property type="entry name" value="Vaccinia Virus protein VP39"/>
    <property type="match status" value="1"/>
</dbReference>
<dbReference type="HAMAP" id="MF_00735">
    <property type="entry name" value="Methyltr_PrmA"/>
    <property type="match status" value="1"/>
</dbReference>
<dbReference type="InterPro" id="IPR050078">
    <property type="entry name" value="Ribosomal_L11_MeTrfase_PrmA"/>
</dbReference>
<dbReference type="InterPro" id="IPR004498">
    <property type="entry name" value="Ribosomal_PrmA_MeTrfase"/>
</dbReference>
<dbReference type="InterPro" id="IPR029063">
    <property type="entry name" value="SAM-dependent_MTases_sf"/>
</dbReference>
<dbReference type="NCBIfam" id="TIGR00406">
    <property type="entry name" value="prmA"/>
    <property type="match status" value="1"/>
</dbReference>
<dbReference type="PANTHER" id="PTHR43648">
    <property type="entry name" value="ELECTRON TRANSFER FLAVOPROTEIN BETA SUBUNIT LYSINE METHYLTRANSFERASE"/>
    <property type="match status" value="1"/>
</dbReference>
<dbReference type="PANTHER" id="PTHR43648:SF1">
    <property type="entry name" value="ELECTRON TRANSFER FLAVOPROTEIN BETA SUBUNIT LYSINE METHYLTRANSFERASE"/>
    <property type="match status" value="1"/>
</dbReference>
<dbReference type="Pfam" id="PF06325">
    <property type="entry name" value="PrmA"/>
    <property type="match status" value="1"/>
</dbReference>
<dbReference type="PIRSF" id="PIRSF000401">
    <property type="entry name" value="RPL11_MTase"/>
    <property type="match status" value="1"/>
</dbReference>
<dbReference type="SUPFAM" id="SSF53335">
    <property type="entry name" value="S-adenosyl-L-methionine-dependent methyltransferases"/>
    <property type="match status" value="1"/>
</dbReference>
<reference key="1">
    <citation type="submission" date="2006-05" db="EMBL/GenBank/DDBJ databases">
        <title>Complete sequence of chromosome 1 of Burkholderia cenocepacia AU 1054.</title>
        <authorList>
            <consortium name="US DOE Joint Genome Institute"/>
            <person name="Copeland A."/>
            <person name="Lucas S."/>
            <person name="Lapidus A."/>
            <person name="Barry K."/>
            <person name="Detter J.C."/>
            <person name="Glavina del Rio T."/>
            <person name="Hammon N."/>
            <person name="Israni S."/>
            <person name="Dalin E."/>
            <person name="Tice H."/>
            <person name="Pitluck S."/>
            <person name="Chain P."/>
            <person name="Malfatti S."/>
            <person name="Shin M."/>
            <person name="Vergez L."/>
            <person name="Schmutz J."/>
            <person name="Larimer F."/>
            <person name="Land M."/>
            <person name="Hauser L."/>
            <person name="Kyrpides N."/>
            <person name="Lykidis A."/>
            <person name="LiPuma J.J."/>
            <person name="Konstantinidis K."/>
            <person name="Tiedje J.M."/>
            <person name="Richardson P."/>
        </authorList>
    </citation>
    <scope>NUCLEOTIDE SEQUENCE [LARGE SCALE GENOMIC DNA]</scope>
    <source>
        <strain>AU 1054</strain>
    </source>
</reference>
<evidence type="ECO:0000255" key="1">
    <source>
        <dbReference type="HAMAP-Rule" id="MF_00735"/>
    </source>
</evidence>
<gene>
    <name evidence="1" type="primary">prmA</name>
    <name type="ordered locus">Bcen_0120</name>
</gene>